<accession>B5Y0N2</accession>
<gene>
    <name evidence="1" type="primary">hemH</name>
    <name type="ordered locus">KPK_4223</name>
</gene>
<dbReference type="EC" id="4.98.1.1" evidence="1"/>
<dbReference type="EMBL" id="CP000964">
    <property type="protein sequence ID" value="ACI11496.1"/>
    <property type="molecule type" value="Genomic_DNA"/>
</dbReference>
<dbReference type="SMR" id="B5Y0N2"/>
<dbReference type="KEGG" id="kpe:KPK_4223"/>
<dbReference type="HOGENOM" id="CLU_018884_0_0_6"/>
<dbReference type="UniPathway" id="UPA00252">
    <property type="reaction ID" value="UER00325"/>
</dbReference>
<dbReference type="Proteomes" id="UP000001734">
    <property type="component" value="Chromosome"/>
</dbReference>
<dbReference type="GO" id="GO:0005737">
    <property type="term" value="C:cytoplasm"/>
    <property type="evidence" value="ECO:0007669"/>
    <property type="project" value="UniProtKB-SubCell"/>
</dbReference>
<dbReference type="GO" id="GO:0004325">
    <property type="term" value="F:ferrochelatase activity"/>
    <property type="evidence" value="ECO:0007669"/>
    <property type="project" value="UniProtKB-UniRule"/>
</dbReference>
<dbReference type="GO" id="GO:0046872">
    <property type="term" value="F:metal ion binding"/>
    <property type="evidence" value="ECO:0007669"/>
    <property type="project" value="UniProtKB-KW"/>
</dbReference>
<dbReference type="GO" id="GO:0006783">
    <property type="term" value="P:heme biosynthetic process"/>
    <property type="evidence" value="ECO:0007669"/>
    <property type="project" value="UniProtKB-UniRule"/>
</dbReference>
<dbReference type="CDD" id="cd00419">
    <property type="entry name" value="Ferrochelatase_C"/>
    <property type="match status" value="1"/>
</dbReference>
<dbReference type="CDD" id="cd03411">
    <property type="entry name" value="Ferrochelatase_N"/>
    <property type="match status" value="1"/>
</dbReference>
<dbReference type="FunFam" id="3.40.50.1400:FF:000004">
    <property type="entry name" value="Ferrochelatase"/>
    <property type="match status" value="1"/>
</dbReference>
<dbReference type="Gene3D" id="3.40.50.1400">
    <property type="match status" value="2"/>
</dbReference>
<dbReference type="HAMAP" id="MF_00323">
    <property type="entry name" value="Ferrochelatase"/>
    <property type="match status" value="1"/>
</dbReference>
<dbReference type="InterPro" id="IPR001015">
    <property type="entry name" value="Ferrochelatase"/>
</dbReference>
<dbReference type="InterPro" id="IPR019772">
    <property type="entry name" value="Ferrochelatase_AS"/>
</dbReference>
<dbReference type="InterPro" id="IPR033644">
    <property type="entry name" value="Ferrochelatase_C"/>
</dbReference>
<dbReference type="InterPro" id="IPR033659">
    <property type="entry name" value="Ferrochelatase_N"/>
</dbReference>
<dbReference type="NCBIfam" id="TIGR00109">
    <property type="entry name" value="hemH"/>
    <property type="match status" value="1"/>
</dbReference>
<dbReference type="PANTHER" id="PTHR11108">
    <property type="entry name" value="FERROCHELATASE"/>
    <property type="match status" value="1"/>
</dbReference>
<dbReference type="PANTHER" id="PTHR11108:SF1">
    <property type="entry name" value="FERROCHELATASE, MITOCHONDRIAL"/>
    <property type="match status" value="1"/>
</dbReference>
<dbReference type="Pfam" id="PF00762">
    <property type="entry name" value="Ferrochelatase"/>
    <property type="match status" value="1"/>
</dbReference>
<dbReference type="SUPFAM" id="SSF53800">
    <property type="entry name" value="Chelatase"/>
    <property type="match status" value="1"/>
</dbReference>
<dbReference type="PROSITE" id="PS00534">
    <property type="entry name" value="FERROCHELATASE"/>
    <property type="match status" value="1"/>
</dbReference>
<proteinExistence type="inferred from homology"/>
<organism>
    <name type="scientific">Klebsiella pneumoniae (strain 342)</name>
    <dbReference type="NCBI Taxonomy" id="507522"/>
    <lineage>
        <taxon>Bacteria</taxon>
        <taxon>Pseudomonadati</taxon>
        <taxon>Pseudomonadota</taxon>
        <taxon>Gammaproteobacteria</taxon>
        <taxon>Enterobacterales</taxon>
        <taxon>Enterobacteriaceae</taxon>
        <taxon>Klebsiella/Raoultella group</taxon>
        <taxon>Klebsiella</taxon>
        <taxon>Klebsiella pneumoniae complex</taxon>
    </lineage>
</organism>
<evidence type="ECO:0000255" key="1">
    <source>
        <dbReference type="HAMAP-Rule" id="MF_00323"/>
    </source>
</evidence>
<protein>
    <recommendedName>
        <fullName evidence="1">Ferrochelatase</fullName>
        <ecNumber evidence="1">4.98.1.1</ecNumber>
    </recommendedName>
    <alternativeName>
        <fullName evidence="1">Heme synthase</fullName>
    </alternativeName>
    <alternativeName>
        <fullName evidence="1">Protoheme ferro-lyase</fullName>
    </alternativeName>
</protein>
<keyword id="KW-0963">Cytoplasm</keyword>
<keyword id="KW-0350">Heme biosynthesis</keyword>
<keyword id="KW-0408">Iron</keyword>
<keyword id="KW-0456">Lyase</keyword>
<keyword id="KW-0479">Metal-binding</keyword>
<keyword id="KW-0627">Porphyrin biosynthesis</keyword>
<name>HEMH_KLEP3</name>
<reference key="1">
    <citation type="journal article" date="2008" name="PLoS Genet.">
        <title>Complete genome sequence of the N2-fixing broad host range endophyte Klebsiella pneumoniae 342 and virulence predictions verified in mice.</title>
        <authorList>
            <person name="Fouts D.E."/>
            <person name="Tyler H.L."/>
            <person name="DeBoy R.T."/>
            <person name="Daugherty S."/>
            <person name="Ren Q."/>
            <person name="Badger J.H."/>
            <person name="Durkin A.S."/>
            <person name="Huot H."/>
            <person name="Shrivastava S."/>
            <person name="Kothari S."/>
            <person name="Dodson R.J."/>
            <person name="Mohamoud Y."/>
            <person name="Khouri H."/>
            <person name="Roesch L.F.W."/>
            <person name="Krogfelt K.A."/>
            <person name="Struve C."/>
            <person name="Triplett E.W."/>
            <person name="Methe B.A."/>
        </authorList>
    </citation>
    <scope>NUCLEOTIDE SEQUENCE [LARGE SCALE GENOMIC DNA]</scope>
    <source>
        <strain>342</strain>
    </source>
</reference>
<feature type="chain" id="PRO_1000116054" description="Ferrochelatase">
    <location>
        <begin position="1"/>
        <end position="320"/>
    </location>
</feature>
<feature type="binding site" evidence="1">
    <location>
        <position position="194"/>
    </location>
    <ligand>
        <name>Fe cation</name>
        <dbReference type="ChEBI" id="CHEBI:24875"/>
    </ligand>
</feature>
<feature type="binding site" evidence="1">
    <location>
        <position position="275"/>
    </location>
    <ligand>
        <name>Fe cation</name>
        <dbReference type="ChEBI" id="CHEBI:24875"/>
    </ligand>
</feature>
<comment type="function">
    <text evidence="1">Catalyzes the ferrous insertion into protoporphyrin IX.</text>
</comment>
<comment type="catalytic activity">
    <reaction evidence="1">
        <text>heme b + 2 H(+) = protoporphyrin IX + Fe(2+)</text>
        <dbReference type="Rhea" id="RHEA:22584"/>
        <dbReference type="ChEBI" id="CHEBI:15378"/>
        <dbReference type="ChEBI" id="CHEBI:29033"/>
        <dbReference type="ChEBI" id="CHEBI:57306"/>
        <dbReference type="ChEBI" id="CHEBI:60344"/>
        <dbReference type="EC" id="4.98.1.1"/>
    </reaction>
</comment>
<comment type="pathway">
    <text evidence="1">Porphyrin-containing compound metabolism; protoheme biosynthesis; protoheme from protoporphyrin-IX: step 1/1.</text>
</comment>
<comment type="subcellular location">
    <subcellularLocation>
        <location evidence="1">Cytoplasm</location>
    </subcellularLocation>
</comment>
<comment type="similarity">
    <text evidence="1">Belongs to the ferrochelatase family.</text>
</comment>
<sequence length="320" mass="35716">MHQTKTGILLANLGTPDAPTPGAVKRYLRQFLSDKRVVDTSRLLWWPLLRGVILPIRSPRVAKLYQSVWMEEGSPLMVYSRRQQQALAARLPDTPVALGMSYGSPSLASAVDDLLAQGVGHIVVLPLYPQYSCSTVAAVWDELARILAKKRAIPGISFIRDYADHPDYIHALAASVRASFAVHGEPDLLLLSYHGIPQRYANQGDDYPQRCRDTTRELVSALGLPPERVMMTFQSRFGREPWLTPYTDETLKMLGEQGTKHIQVLCPGFAADCLETLEEIAVQNREVFLEAGGEQYEYIPALNADVAHIEMMVNLTAPYR</sequence>